<accession>Q72ZW2</accession>
<reference key="1">
    <citation type="journal article" date="2004" name="Nucleic Acids Res.">
        <title>The genome sequence of Bacillus cereus ATCC 10987 reveals metabolic adaptations and a large plasmid related to Bacillus anthracis pXO1.</title>
        <authorList>
            <person name="Rasko D.A."/>
            <person name="Ravel J."/>
            <person name="Oekstad O.A."/>
            <person name="Helgason E."/>
            <person name="Cer R.Z."/>
            <person name="Jiang L."/>
            <person name="Shores K.A."/>
            <person name="Fouts D.E."/>
            <person name="Tourasse N.J."/>
            <person name="Angiuoli S.V."/>
            <person name="Kolonay J.F."/>
            <person name="Nelson W.C."/>
            <person name="Kolstoe A.-B."/>
            <person name="Fraser C.M."/>
            <person name="Read T.D."/>
        </authorList>
    </citation>
    <scope>NUCLEOTIDE SEQUENCE [LARGE SCALE GENOMIC DNA]</scope>
    <source>
        <strain>ATCC 10987 / NRS 248</strain>
    </source>
</reference>
<protein>
    <recommendedName>
        <fullName evidence="1">Porphobilinogen deaminase</fullName>
        <shortName evidence="1">PBG</shortName>
        <ecNumber evidence="1">2.5.1.61</ecNumber>
    </recommendedName>
    <alternativeName>
        <fullName evidence="1">Hydroxymethylbilane synthase</fullName>
        <shortName evidence="1">HMBS</shortName>
    </alternativeName>
    <alternativeName>
        <fullName evidence="1">Pre-uroporphyrinogen synthase</fullName>
    </alternativeName>
</protein>
<evidence type="ECO:0000255" key="1">
    <source>
        <dbReference type="HAMAP-Rule" id="MF_00260"/>
    </source>
</evidence>
<organism>
    <name type="scientific">Bacillus cereus (strain ATCC 10987 / NRS 248)</name>
    <dbReference type="NCBI Taxonomy" id="222523"/>
    <lineage>
        <taxon>Bacteria</taxon>
        <taxon>Bacillati</taxon>
        <taxon>Bacillota</taxon>
        <taxon>Bacilli</taxon>
        <taxon>Bacillales</taxon>
        <taxon>Bacillaceae</taxon>
        <taxon>Bacillus</taxon>
        <taxon>Bacillus cereus group</taxon>
    </lineage>
</organism>
<keyword id="KW-0627">Porphyrin biosynthesis</keyword>
<keyword id="KW-0808">Transferase</keyword>
<dbReference type="EC" id="2.5.1.61" evidence="1"/>
<dbReference type="EMBL" id="AE017194">
    <property type="protein sequence ID" value="AAS43456.1"/>
    <property type="molecule type" value="Genomic_DNA"/>
</dbReference>
<dbReference type="SMR" id="Q72ZW2"/>
<dbReference type="KEGG" id="bca:BCE_4555"/>
<dbReference type="HOGENOM" id="CLU_019704_0_2_9"/>
<dbReference type="UniPathway" id="UPA00251">
    <property type="reaction ID" value="UER00319"/>
</dbReference>
<dbReference type="Proteomes" id="UP000002527">
    <property type="component" value="Chromosome"/>
</dbReference>
<dbReference type="GO" id="GO:0005737">
    <property type="term" value="C:cytoplasm"/>
    <property type="evidence" value="ECO:0007669"/>
    <property type="project" value="TreeGrafter"/>
</dbReference>
<dbReference type="GO" id="GO:0004418">
    <property type="term" value="F:hydroxymethylbilane synthase activity"/>
    <property type="evidence" value="ECO:0007669"/>
    <property type="project" value="UniProtKB-UniRule"/>
</dbReference>
<dbReference type="GO" id="GO:0006782">
    <property type="term" value="P:protoporphyrinogen IX biosynthetic process"/>
    <property type="evidence" value="ECO:0007669"/>
    <property type="project" value="UniProtKB-UniRule"/>
</dbReference>
<dbReference type="CDD" id="cd13646">
    <property type="entry name" value="PBP2_EcHMBS_like"/>
    <property type="match status" value="1"/>
</dbReference>
<dbReference type="FunFam" id="3.30.160.40:FF:000001">
    <property type="entry name" value="Porphobilinogen deaminase"/>
    <property type="match status" value="1"/>
</dbReference>
<dbReference type="FunFam" id="3.40.190.10:FF:000004">
    <property type="entry name" value="Porphobilinogen deaminase"/>
    <property type="match status" value="1"/>
</dbReference>
<dbReference type="FunFam" id="3.40.190.10:FF:000005">
    <property type="entry name" value="Porphobilinogen deaminase"/>
    <property type="match status" value="1"/>
</dbReference>
<dbReference type="Gene3D" id="3.40.190.10">
    <property type="entry name" value="Periplasmic binding protein-like II"/>
    <property type="match status" value="2"/>
</dbReference>
<dbReference type="Gene3D" id="3.30.160.40">
    <property type="entry name" value="Porphobilinogen deaminase, C-terminal domain"/>
    <property type="match status" value="1"/>
</dbReference>
<dbReference type="HAMAP" id="MF_00260">
    <property type="entry name" value="Porphobil_deam"/>
    <property type="match status" value="1"/>
</dbReference>
<dbReference type="InterPro" id="IPR000860">
    <property type="entry name" value="HemC"/>
</dbReference>
<dbReference type="InterPro" id="IPR022419">
    <property type="entry name" value="Porphobilin_deaminase_cofac_BS"/>
</dbReference>
<dbReference type="InterPro" id="IPR022417">
    <property type="entry name" value="Porphobilin_deaminase_N"/>
</dbReference>
<dbReference type="InterPro" id="IPR022418">
    <property type="entry name" value="Porphobilinogen_deaminase_C"/>
</dbReference>
<dbReference type="InterPro" id="IPR036803">
    <property type="entry name" value="Porphobilinogen_deaminase_C_sf"/>
</dbReference>
<dbReference type="NCBIfam" id="TIGR00212">
    <property type="entry name" value="hemC"/>
    <property type="match status" value="1"/>
</dbReference>
<dbReference type="PANTHER" id="PTHR11557">
    <property type="entry name" value="PORPHOBILINOGEN DEAMINASE"/>
    <property type="match status" value="1"/>
</dbReference>
<dbReference type="PANTHER" id="PTHR11557:SF0">
    <property type="entry name" value="PORPHOBILINOGEN DEAMINASE"/>
    <property type="match status" value="1"/>
</dbReference>
<dbReference type="Pfam" id="PF01379">
    <property type="entry name" value="Porphobil_deam"/>
    <property type="match status" value="1"/>
</dbReference>
<dbReference type="Pfam" id="PF03900">
    <property type="entry name" value="Porphobil_deamC"/>
    <property type="match status" value="1"/>
</dbReference>
<dbReference type="PIRSF" id="PIRSF001438">
    <property type="entry name" value="4pyrrol_synth_OHMeBilane_synth"/>
    <property type="match status" value="1"/>
</dbReference>
<dbReference type="PRINTS" id="PR00151">
    <property type="entry name" value="PORPHBDMNASE"/>
</dbReference>
<dbReference type="SUPFAM" id="SSF53850">
    <property type="entry name" value="Periplasmic binding protein-like II"/>
    <property type="match status" value="1"/>
</dbReference>
<dbReference type="SUPFAM" id="SSF54782">
    <property type="entry name" value="Porphobilinogen deaminase (hydroxymethylbilane synthase), C-terminal domain"/>
    <property type="match status" value="1"/>
</dbReference>
<dbReference type="PROSITE" id="PS00533">
    <property type="entry name" value="PORPHOBILINOGEN_DEAM"/>
    <property type="match status" value="1"/>
</dbReference>
<name>HEM3_BACC1</name>
<proteinExistence type="inferred from homology"/>
<comment type="function">
    <text evidence="1">Tetrapolymerization of the monopyrrole PBG into the hydroxymethylbilane pre-uroporphyrinogen in several discrete steps.</text>
</comment>
<comment type="catalytic activity">
    <reaction evidence="1">
        <text>4 porphobilinogen + H2O = hydroxymethylbilane + 4 NH4(+)</text>
        <dbReference type="Rhea" id="RHEA:13185"/>
        <dbReference type="ChEBI" id="CHEBI:15377"/>
        <dbReference type="ChEBI" id="CHEBI:28938"/>
        <dbReference type="ChEBI" id="CHEBI:57845"/>
        <dbReference type="ChEBI" id="CHEBI:58126"/>
        <dbReference type="EC" id="2.5.1.61"/>
    </reaction>
</comment>
<comment type="cofactor">
    <cofactor evidence="1">
        <name>dipyrromethane</name>
        <dbReference type="ChEBI" id="CHEBI:60342"/>
    </cofactor>
    <text evidence="1">Binds 1 dipyrromethane group covalently.</text>
</comment>
<comment type="pathway">
    <text evidence="1">Porphyrin-containing compound metabolism; protoporphyrin-IX biosynthesis; coproporphyrinogen-III from 5-aminolevulinate: step 2/4.</text>
</comment>
<comment type="subunit">
    <text evidence="1">Monomer.</text>
</comment>
<comment type="miscellaneous">
    <text evidence="1">The porphobilinogen subunits are added to the dipyrromethane group.</text>
</comment>
<comment type="similarity">
    <text evidence="1">Belongs to the HMBS family.</text>
</comment>
<gene>
    <name evidence="1" type="primary">hemC</name>
    <name type="ordered locus">BCE_4555</name>
</gene>
<feature type="chain" id="PRO_0000142904" description="Porphobilinogen deaminase">
    <location>
        <begin position="1"/>
        <end position="309"/>
    </location>
</feature>
<feature type="modified residue" description="S-(dipyrrolylmethanemethyl)cysteine" evidence="1">
    <location>
        <position position="241"/>
    </location>
</feature>
<sequence>MRKIIVGSRKSKLALTQTNWFIDQLKALGLPYEFEVKEIVTKGDVILDVTLSKVGGKGLFVKEIEHALLTKEIDMAVHSMKDMPAVLPEGLMIGCTPKRVDPRDAFISKNGASFKELAEGAILGTSSLRRSAQLLAARPDLQVKWIRGNIDTRLRKLKEEDYDAIILATAGLQRMGWDNEVITEHLDETLCVPAVGQGALAIECREDDKDLLQLLAHMNDGVTEKTVAAERVFLHKLEGGCQVPIAGYATLTENDAIELTALVGSMDGSVLLKETVVGTDPEKVGLEAADRLIKQGAKELILAANKGQQ</sequence>